<accession>C0S8M6</accession>
<comment type="function">
    <text evidence="1">Assembly factor required for Rieske Fe-S protein RIP1 incorporation into the cytochrome b-c1 (CIII) complex. Functions as a chaperone, binding to this subunit within the mitochondrial matrix and stabilizing it prior to its translocation and insertion into the late CIII dimeric intermediate within the mitochondrial inner membrane. Modulates the mitochondrial matrix zinc pool (By similarity).</text>
</comment>
<comment type="subunit">
    <text evidence="1">Interacts with RIP1.</text>
</comment>
<comment type="subcellular location">
    <subcellularLocation>
        <location evidence="1">Mitochondrion matrix</location>
    </subcellularLocation>
</comment>
<comment type="similarity">
    <text evidence="3">Belongs to the complex I LYR family. MZM1 subfamily.</text>
</comment>
<protein>
    <recommendedName>
        <fullName>Mitochondrial zinc maintenance protein 1, mitochondrial</fullName>
    </recommendedName>
</protein>
<feature type="transit peptide" description="Mitochondrion" evidence="2">
    <location>
        <begin position="1"/>
        <end status="unknown"/>
    </location>
</feature>
<feature type="chain" id="PRO_0000405503" description="Mitochondrial zinc maintenance protein 1, mitochondrial">
    <location>
        <begin status="unknown"/>
        <end position="124"/>
    </location>
</feature>
<name>MZM1_PARBP</name>
<dbReference type="EMBL" id="KN305535">
    <property type="protein sequence ID" value="EEH21412.1"/>
    <property type="molecule type" value="Genomic_DNA"/>
</dbReference>
<dbReference type="SMR" id="C0S8M6"/>
<dbReference type="VEuPathDB" id="FungiDB:PABG_03628"/>
<dbReference type="HOGENOM" id="CLU_147114_2_2_1"/>
<dbReference type="OrthoDB" id="27955at33183"/>
<dbReference type="GO" id="GO:0005759">
    <property type="term" value="C:mitochondrial matrix"/>
    <property type="evidence" value="ECO:0007669"/>
    <property type="project" value="UniProtKB-SubCell"/>
</dbReference>
<dbReference type="GO" id="GO:0044183">
    <property type="term" value="F:protein folding chaperone"/>
    <property type="evidence" value="ECO:0007669"/>
    <property type="project" value="TreeGrafter"/>
</dbReference>
<dbReference type="GO" id="GO:0034551">
    <property type="term" value="P:mitochondrial respiratory chain complex III assembly"/>
    <property type="evidence" value="ECO:0007669"/>
    <property type="project" value="InterPro"/>
</dbReference>
<dbReference type="CDD" id="cd20267">
    <property type="entry name" value="Complex1_LYR_LYRM7"/>
    <property type="match status" value="1"/>
</dbReference>
<dbReference type="InterPro" id="IPR008011">
    <property type="entry name" value="Complex1_LYR_dom"/>
</dbReference>
<dbReference type="InterPro" id="IPR045298">
    <property type="entry name" value="Complex1_LYR_LYRM7"/>
</dbReference>
<dbReference type="InterPro" id="IPR050435">
    <property type="entry name" value="MZM1/LYRM7"/>
</dbReference>
<dbReference type="PANTHER" id="PTHR46749">
    <property type="entry name" value="COMPLEX III ASSEMBLY FACTOR LYRM7"/>
    <property type="match status" value="1"/>
</dbReference>
<dbReference type="PANTHER" id="PTHR46749:SF1">
    <property type="entry name" value="COMPLEX III ASSEMBLY FACTOR LYRM7"/>
    <property type="match status" value="1"/>
</dbReference>
<dbReference type="Pfam" id="PF05347">
    <property type="entry name" value="Complex1_LYR"/>
    <property type="match status" value="1"/>
</dbReference>
<reference key="1">
    <citation type="journal article" date="2011" name="PLoS Genet.">
        <title>Comparative genomic analysis of human fungal pathogens causing paracoccidioidomycosis.</title>
        <authorList>
            <person name="Desjardins C.A."/>
            <person name="Champion M.D."/>
            <person name="Holder J.W."/>
            <person name="Muszewska A."/>
            <person name="Goldberg J."/>
            <person name="Bailao A.M."/>
            <person name="Brigido M.M."/>
            <person name="Ferreira M.E."/>
            <person name="Garcia A.M."/>
            <person name="Grynberg M."/>
            <person name="Gujja S."/>
            <person name="Heiman D.I."/>
            <person name="Henn M.R."/>
            <person name="Kodira C.D."/>
            <person name="Leon-Narvaez H."/>
            <person name="Longo L.V.G."/>
            <person name="Ma L.-J."/>
            <person name="Malavazi I."/>
            <person name="Matsuo A.L."/>
            <person name="Morais F.V."/>
            <person name="Pereira M."/>
            <person name="Rodriguez-Brito S."/>
            <person name="Sakthikumar S."/>
            <person name="Salem-Izacc S.M."/>
            <person name="Sykes S.M."/>
            <person name="Teixeira M.M."/>
            <person name="Vallejo M.C."/>
            <person name="Walter M.E."/>
            <person name="Yandava C."/>
            <person name="Young S."/>
            <person name="Zeng Q."/>
            <person name="Zucker J."/>
            <person name="Felipe M.S."/>
            <person name="Goldman G.H."/>
            <person name="Haas B.J."/>
            <person name="McEwen J.G."/>
            <person name="Nino-Vega G."/>
            <person name="Puccia R."/>
            <person name="San-Blas G."/>
            <person name="Soares C.M."/>
            <person name="Birren B.W."/>
            <person name="Cuomo C.A."/>
        </authorList>
    </citation>
    <scope>NUCLEOTIDE SEQUENCE [LARGE SCALE GENOMIC DNA]</scope>
    <source>
        <strain>Pb03</strain>
    </source>
</reference>
<gene>
    <name type="primary">MZM1</name>
    <name type="ORF">PABG_03628</name>
</gene>
<organism>
    <name type="scientific">Paracoccidioides brasiliensis (strain Pb03)</name>
    <dbReference type="NCBI Taxonomy" id="482561"/>
    <lineage>
        <taxon>Eukaryota</taxon>
        <taxon>Fungi</taxon>
        <taxon>Dikarya</taxon>
        <taxon>Ascomycota</taxon>
        <taxon>Pezizomycotina</taxon>
        <taxon>Eurotiomycetes</taxon>
        <taxon>Eurotiomycetidae</taxon>
        <taxon>Onygenales</taxon>
        <taxon>Ajellomycetaceae</taxon>
        <taxon>Paracoccidioides</taxon>
    </lineage>
</organism>
<proteinExistence type="inferred from homology"/>
<sequence length="124" mass="13713">MATTPLPNALSAYRLLLRATRIAFQGDFTTLHAARAEARKHFDQNRRLGVDTPKHIQHAVETAEILRTNVVQGVRVEGSGEAGKEEQRYELRIHEHIERGDNDTIKTAGNKGIKAAVGKTCSQS</sequence>
<evidence type="ECO:0000250" key="1"/>
<evidence type="ECO:0000255" key="2"/>
<evidence type="ECO:0000305" key="3"/>
<keyword id="KW-0143">Chaperone</keyword>
<keyword id="KW-0496">Mitochondrion</keyword>
<keyword id="KW-0809">Transit peptide</keyword>